<organism>
    <name type="scientific">Entamoeba histolytica (strain ATCC 30459 / HM-1:IMSS / ABRM)</name>
    <dbReference type="NCBI Taxonomy" id="294381"/>
    <lineage>
        <taxon>Eukaryota</taxon>
        <taxon>Amoebozoa</taxon>
        <taxon>Evosea</taxon>
        <taxon>Archamoebae</taxon>
        <taxon>Mastigamoebida</taxon>
        <taxon>Entamoebidae</taxon>
        <taxon>Entamoeba</taxon>
    </lineage>
</organism>
<keyword id="KW-0175">Coiled coil</keyword>
<keyword id="KW-0963">Cytoplasm</keyword>
<keyword id="KW-0210">Decarboxylase</keyword>
<keyword id="KW-0456">Lyase</keyword>
<keyword id="KW-1185">Reference proteome</keyword>
<dbReference type="EC" id="4.1.1.38" evidence="2"/>
<dbReference type="EMBL" id="DS571177">
    <property type="protein sequence ID" value="EAL49379.1"/>
    <property type="molecule type" value="Genomic_DNA"/>
</dbReference>
<dbReference type="RefSeq" id="XP_654765.1">
    <property type="nucleotide sequence ID" value="XM_649673.1"/>
</dbReference>
<dbReference type="SMR" id="C4LY96"/>
<dbReference type="STRING" id="5759.C4LY96"/>
<dbReference type="EnsemblProtists" id="rna_EHI_166920-1">
    <property type="protein sequence ID" value="rna_EHI_166920-1"/>
    <property type="gene ID" value="EHI_166920"/>
</dbReference>
<dbReference type="GeneID" id="3409079"/>
<dbReference type="KEGG" id="ehi:EHI_166920"/>
<dbReference type="VEuPathDB" id="AmoebaDB:EHI5A_126350"/>
<dbReference type="VEuPathDB" id="AmoebaDB:EHI5A_194890"/>
<dbReference type="VEuPathDB" id="AmoebaDB:EHI5A_252600"/>
<dbReference type="VEuPathDB" id="AmoebaDB:EHI_166920"/>
<dbReference type="VEuPathDB" id="AmoebaDB:KM1_081510"/>
<dbReference type="VEuPathDB" id="AmoebaDB:KM1_309960"/>
<dbReference type="eggNOG" id="ENOG502QW6Z">
    <property type="taxonomic scope" value="Eukaryota"/>
</dbReference>
<dbReference type="HOGENOM" id="CLU_275663_0_0_1"/>
<dbReference type="InParanoid" id="C4LY96"/>
<dbReference type="OMA" id="HYQELPE"/>
<dbReference type="OrthoDB" id="10248819at2759"/>
<dbReference type="BRENDA" id="4.1.1.38">
    <property type="organism ID" value="2080"/>
</dbReference>
<dbReference type="Proteomes" id="UP000001926">
    <property type="component" value="Partially assembled WGS sequence"/>
</dbReference>
<dbReference type="GO" id="GO:0005829">
    <property type="term" value="C:cytosol"/>
    <property type="evidence" value="ECO:0000314"/>
    <property type="project" value="UniProtKB"/>
</dbReference>
<dbReference type="GO" id="GO:0030585">
    <property type="term" value="F:phosphoenolpyruvate carboxykinase (diphosphate) activity"/>
    <property type="evidence" value="ECO:0000314"/>
    <property type="project" value="UniProtKB"/>
</dbReference>
<dbReference type="GO" id="GO:0070208">
    <property type="term" value="P:protein heterotrimerization"/>
    <property type="evidence" value="ECO:0000314"/>
    <property type="project" value="UniProtKB"/>
</dbReference>
<gene>
    <name evidence="4" type="primary">PEPCK1</name>
    <name evidence="5" type="ORF">EHI_166920</name>
</gene>
<name>PECK1_ENTH1</name>
<feature type="chain" id="PRO_0000434730" description="PPi-type phosphoenolpyruvate carboxykinase 1">
    <location>
        <begin position="1"/>
        <end position="1151"/>
    </location>
</feature>
<feature type="coiled-coil region" evidence="1">
    <location>
        <begin position="1083"/>
        <end position="1129"/>
    </location>
</feature>
<reference key="1">
    <citation type="journal article" date="2005" name="Nature">
        <title>The genome of the protist parasite Entamoeba histolytica.</title>
        <authorList>
            <person name="Loftus B.J."/>
            <person name="Anderson I."/>
            <person name="Davies R."/>
            <person name="Alsmark U.C."/>
            <person name="Samuelson J."/>
            <person name="Amedeo P."/>
            <person name="Roncaglia P."/>
            <person name="Berriman M."/>
            <person name="Hirt R.P."/>
            <person name="Mann B.J."/>
            <person name="Nozaki T."/>
            <person name="Suh B."/>
            <person name="Pop M."/>
            <person name="Duchene M."/>
            <person name="Ackers J."/>
            <person name="Tannich E."/>
            <person name="Leippe M."/>
            <person name="Hofer M."/>
            <person name="Bruchhaus I."/>
            <person name="Willhoeft U."/>
            <person name="Bhattacharya A."/>
            <person name="Chillingworth T."/>
            <person name="Churcher C.M."/>
            <person name="Hance Z."/>
            <person name="Harris B."/>
            <person name="Harris D."/>
            <person name="Jagels K."/>
            <person name="Moule S."/>
            <person name="Mungall K.L."/>
            <person name="Ormond D."/>
            <person name="Squares R."/>
            <person name="Whitehead S."/>
            <person name="Quail M.A."/>
            <person name="Rabbinowitsch E."/>
            <person name="Norbertczak H."/>
            <person name="Price C."/>
            <person name="Wang Z."/>
            <person name="Guillen N."/>
            <person name="Gilchrist C."/>
            <person name="Stroup S.E."/>
            <person name="Bhattacharya S."/>
            <person name="Lohia A."/>
            <person name="Foster P.G."/>
            <person name="Sicheritz-Ponten T."/>
            <person name="Weber C."/>
            <person name="Singh U."/>
            <person name="Mukherjee C."/>
            <person name="El-Sayed N.M.A."/>
            <person name="Petri W.A."/>
            <person name="Clark C.G."/>
            <person name="Embley T.M."/>
            <person name="Barrell B.G."/>
            <person name="Fraser C.M."/>
            <person name="Hall N."/>
        </authorList>
    </citation>
    <scope>NUCLEOTIDE SEQUENCE [LARGE SCALE GENOMIC DNA]</scope>
    <source>
        <strain>ATCC 30459 / HM-1:IMSS / ABRM</strain>
    </source>
</reference>
<reference key="2">
    <citation type="journal article" date="2010" name="PLoS Negl. Trop. Dis.">
        <title>New assembly, reannotation and analysis of the Entamoeba histolytica genome reveal new genomic features and protein content information.</title>
        <authorList>
            <person name="Lorenzi H.A."/>
            <person name="Puiu D."/>
            <person name="Miller J.R."/>
            <person name="Brinkac L.M."/>
            <person name="Amedeo P."/>
            <person name="Hall N."/>
            <person name="Caler E.V."/>
        </authorList>
    </citation>
    <scope>GENOME REANNOTATION</scope>
    <source>
        <strain>ATCC 30459 / HM-1:IMSS / ABRM</strain>
    </source>
</reference>
<reference key="3">
    <citation type="journal article" date="2015" name="J. Biol. Chem.">
        <title>Discovery of PPi-type phosphoenolpyruvate carboxykinase genes in eukaryotes and bacteria.</title>
        <authorList>
            <person name="Chiba Y."/>
            <person name="Kamikawa R."/>
            <person name="Nakada-Tsukui K."/>
            <person name="Saito-Nakano Y."/>
            <person name="Nozaki T."/>
        </authorList>
    </citation>
    <scope>IDENTIFICATION BY MASS SPECTROMETRY</scope>
    <scope>FUNCTION</scope>
    <scope>CATALYTIC ACTIVITY</scope>
    <scope>SUBCELLULAR LOCATION</scope>
    <scope>SUBUNIT</scope>
</reference>
<protein>
    <recommendedName>
        <fullName evidence="3">PPi-type phosphoenolpyruvate carboxykinase 1</fullName>
        <shortName evidence="3">EhPEPCK1</shortName>
        <shortName evidence="3">PPi-PEPCK1</shortName>
        <ecNumber evidence="2">4.1.1.38</ecNumber>
    </recommendedName>
    <alternativeName>
        <fullName evidence="4">Diphosphate-dependent phosphoenolpyruvate carboxykinase 1</fullName>
    </alternativeName>
    <alternativeName>
        <fullName evidence="4">PEP carboxyphosphotransferase 1</fullName>
    </alternativeName>
</protein>
<accession>C4LY96</accession>
<comment type="function">
    <text evidence="2">Inorganic pyrophosphate (PPi)-dependent phosphoenolpyruvate carboxykinase, which regulates the carbon flow of the central metabolism by fixing CO(2) to phosphoenolpyruvate to produce oxaloacetate. Can also produce pyruvate and diphosphate from phosphoenolpyruvate and phosphate.</text>
</comment>
<comment type="catalytic activity">
    <reaction evidence="2">
        <text>oxaloacetate + diphosphate = phosphoenolpyruvate + phosphate + CO2</text>
        <dbReference type="Rhea" id="RHEA:22356"/>
        <dbReference type="ChEBI" id="CHEBI:16452"/>
        <dbReference type="ChEBI" id="CHEBI:16526"/>
        <dbReference type="ChEBI" id="CHEBI:33019"/>
        <dbReference type="ChEBI" id="CHEBI:43474"/>
        <dbReference type="ChEBI" id="CHEBI:58702"/>
        <dbReference type="EC" id="4.1.1.38"/>
    </reaction>
</comment>
<comment type="subunit">
    <text evidence="2">Monomer and trimer; forms heterotrimers with PEPCK2 and PEPCK3.</text>
</comment>
<comment type="subcellular location">
    <subcellularLocation>
        <location evidence="2">Cytoplasm</location>
        <location evidence="2">Cytosol</location>
    </subcellularLocation>
</comment>
<comment type="similarity">
    <text evidence="4">Belongs to the PPi-type phosphoenolpyruvate carboxykinase family.</text>
</comment>
<evidence type="ECO:0000255" key="1"/>
<evidence type="ECO:0000269" key="2">
    <source>
    </source>
</evidence>
<evidence type="ECO:0000303" key="3">
    <source>
    </source>
</evidence>
<evidence type="ECO:0000305" key="4"/>
<evidence type="ECO:0000312" key="5">
    <source>
        <dbReference type="EMBL" id="EAL49379.1"/>
    </source>
</evidence>
<proteinExistence type="evidence at protein level"/>
<sequence>MFNQEKGTDYPILNIQELEALADLKLSAMGKEYPKHDKSDAIDVVAPLVDIIAEGDQESTAPIDARLQTFLNSYFAECGEEVPKIPDNTFILDREGLGRVLSFPPHKQEFFCETMKSYKIKQGVLHNPAKDKRTTVGVFHICQSDVPVPADKIECPKIAFLRMLKAAFYGAPDDHLIIPYTAECKEPTRSWVSLYMRPVVVPGVKGVKGFEHEKATEMHFFVPGNMVSCLDFVESVFGNAGNPRLSKNDAALDPLGWTGHSGMAILAPHLTRMTKKECGLPHISQATERQKRERMCWEKEDELYNDGKTFKMYCRDASGVICTIIADNYFGYCKKEVKTQISYSANLYGFAEEEHAGGAVTRPSYDLGEACKAVQYAEGYKFSEMVEKNKHSIIVKEEGYAVDKKYPEGIIYVPEDSVFTIEDASIKFNHNGKEESILLTPKVNYVLPNGYTIILHDTMTSRRWTLRGILPQYTLCHKPCTVSGGGKSEISKNISDAIFEGKMFVNNKEEEFKAVQKVFDHDFSRRYADGEIKSAHILDPNVTLGTVVKMLTPSSFFTEEHNEFVAAIPPMIVELALTIKSLYREEWKGDWQSRITVDKINGKEGHELKYRKMPLPSQYLRVGFERDETTWRVFQLRKDFFPAAKLQMEDDITASVIVPTKLLKTPINTNGKKACKIVKNCELRLFQRPDDAVFRGYDKQTEYDFSIPGHFISNYQPMTREEAKDFTKDVVRLYQYTEPMRKCLQDFVAGKDEAKYIVSSSHTRLVQDGDKLVGSKNPRYLQRRPDMLDPEYTYMTFKAIQLFRKISDEEPLYTPVDAVLSGRRNNPPQVAKNGMKLRPLSVFAPLHYFELPELLMECITSMTGASPSMFGAGSEGALTKGPFNSLPAVVDLNNYLLGMICCGYSGFVSSASYCGPHYKVAHDISLLIPEIWSRMRRYEQEPKYLIEHGYLEPCPDVTYNGKTYSGKRLGYRITKDFTVHYFSSIFSVPNSVMPEDFLKPELQDLAIYADSYEYIEQTDKGIAMNYVKDGTVEGACPPLKALIYIMANGEYNGMTRESKEFREMFDAKTILNSEWYKERLVTRQKLEVAKLNKDLAYLNKTIAEKPRLAETLNKQIAAVKEELQYVSSEEYLIDIDGSIGTDPYPYKCMKH</sequence>